<comment type="function">
    <text evidence="1">Catalyzes the conversion of S-adenosyl-L-methionine (SAM) to carboxy-S-adenosyl-L-methionine (Cx-SAM).</text>
</comment>
<comment type="catalytic activity">
    <reaction evidence="1">
        <text>prephenate + S-adenosyl-L-methionine = carboxy-S-adenosyl-L-methionine + 3-phenylpyruvate + H2O</text>
        <dbReference type="Rhea" id="RHEA:51692"/>
        <dbReference type="ChEBI" id="CHEBI:15377"/>
        <dbReference type="ChEBI" id="CHEBI:18005"/>
        <dbReference type="ChEBI" id="CHEBI:29934"/>
        <dbReference type="ChEBI" id="CHEBI:59789"/>
        <dbReference type="ChEBI" id="CHEBI:134278"/>
    </reaction>
</comment>
<comment type="subunit">
    <text evidence="1">Homodimer.</text>
</comment>
<comment type="similarity">
    <text evidence="1">Belongs to the class I-like SAM-binding methyltransferase superfamily. Cx-SAM synthase family.</text>
</comment>
<comment type="sequence caution" evidence="2">
    <conflict type="erroneous initiation">
        <sequence resource="EMBL-CDS" id="ABE55172"/>
    </conflict>
</comment>
<accession>Q12N04</accession>
<keyword id="KW-1185">Reference proteome</keyword>
<keyword id="KW-0949">S-adenosyl-L-methionine</keyword>
<keyword id="KW-0808">Transferase</keyword>
<gene>
    <name evidence="1" type="primary">cmoA</name>
    <name type="ordered locus">Sden_1889</name>
</gene>
<evidence type="ECO:0000255" key="1">
    <source>
        <dbReference type="HAMAP-Rule" id="MF_01589"/>
    </source>
</evidence>
<evidence type="ECO:0000305" key="2"/>
<name>CMOA_SHEDO</name>
<proteinExistence type="inferred from homology"/>
<reference key="1">
    <citation type="submission" date="2006-03" db="EMBL/GenBank/DDBJ databases">
        <title>Complete sequence of Shewanella denitrificans OS217.</title>
        <authorList>
            <consortium name="US DOE Joint Genome Institute"/>
            <person name="Copeland A."/>
            <person name="Lucas S."/>
            <person name="Lapidus A."/>
            <person name="Barry K."/>
            <person name="Detter J.C."/>
            <person name="Glavina del Rio T."/>
            <person name="Hammon N."/>
            <person name="Israni S."/>
            <person name="Dalin E."/>
            <person name="Tice H."/>
            <person name="Pitluck S."/>
            <person name="Brettin T."/>
            <person name="Bruce D."/>
            <person name="Han C."/>
            <person name="Tapia R."/>
            <person name="Gilna P."/>
            <person name="Kiss H."/>
            <person name="Schmutz J."/>
            <person name="Larimer F."/>
            <person name="Land M."/>
            <person name="Hauser L."/>
            <person name="Kyrpides N."/>
            <person name="Lykidis A."/>
            <person name="Richardson P."/>
        </authorList>
    </citation>
    <scope>NUCLEOTIDE SEQUENCE [LARGE SCALE GENOMIC DNA]</scope>
    <source>
        <strain>OS217 / ATCC BAA-1090 / DSM 15013</strain>
    </source>
</reference>
<feature type="chain" id="PRO_0000314378" description="Carboxy-S-adenosyl-L-methionine synthase">
    <location>
        <begin position="1"/>
        <end position="243"/>
    </location>
</feature>
<feature type="binding site" evidence="1">
    <location>
        <position position="40"/>
    </location>
    <ligand>
        <name>S-adenosyl-L-methionine</name>
        <dbReference type="ChEBI" id="CHEBI:59789"/>
    </ligand>
</feature>
<feature type="binding site" evidence="1">
    <location>
        <begin position="65"/>
        <end position="67"/>
    </location>
    <ligand>
        <name>S-adenosyl-L-methionine</name>
        <dbReference type="ChEBI" id="CHEBI:59789"/>
    </ligand>
</feature>
<feature type="binding site" evidence="1">
    <location>
        <begin position="90"/>
        <end position="91"/>
    </location>
    <ligand>
        <name>S-adenosyl-L-methionine</name>
        <dbReference type="ChEBI" id="CHEBI:59789"/>
    </ligand>
</feature>
<feature type="binding site" evidence="1">
    <location>
        <begin position="118"/>
        <end position="119"/>
    </location>
    <ligand>
        <name>S-adenosyl-L-methionine</name>
        <dbReference type="ChEBI" id="CHEBI:59789"/>
    </ligand>
</feature>
<feature type="binding site" evidence="1">
    <location>
        <position position="133"/>
    </location>
    <ligand>
        <name>S-adenosyl-L-methionine</name>
        <dbReference type="ChEBI" id="CHEBI:59789"/>
    </ligand>
</feature>
<feature type="binding site" evidence="1">
    <location>
        <position position="200"/>
    </location>
    <ligand>
        <name>S-adenosyl-L-methionine</name>
        <dbReference type="ChEBI" id="CHEBI:59789"/>
    </ligand>
</feature>
<dbReference type="EC" id="2.1.3.-" evidence="1"/>
<dbReference type="EMBL" id="CP000302">
    <property type="protein sequence ID" value="ABE55172.1"/>
    <property type="status" value="ALT_INIT"/>
    <property type="molecule type" value="Genomic_DNA"/>
</dbReference>
<dbReference type="RefSeq" id="WP_041405752.1">
    <property type="nucleotide sequence ID" value="NC_007954.1"/>
</dbReference>
<dbReference type="SMR" id="Q12N04"/>
<dbReference type="STRING" id="318161.Sden_1889"/>
<dbReference type="KEGG" id="sdn:Sden_1889"/>
<dbReference type="eggNOG" id="COG2226">
    <property type="taxonomic scope" value="Bacteria"/>
</dbReference>
<dbReference type="HOGENOM" id="CLU_078475_0_0_6"/>
<dbReference type="OrthoDB" id="9779941at2"/>
<dbReference type="Proteomes" id="UP000001982">
    <property type="component" value="Chromosome"/>
</dbReference>
<dbReference type="GO" id="GO:0016743">
    <property type="term" value="F:carboxyl- or carbamoyltransferase activity"/>
    <property type="evidence" value="ECO:0007669"/>
    <property type="project" value="UniProtKB-UniRule"/>
</dbReference>
<dbReference type="GO" id="GO:1904047">
    <property type="term" value="F:S-adenosyl-L-methionine binding"/>
    <property type="evidence" value="ECO:0007669"/>
    <property type="project" value="UniProtKB-UniRule"/>
</dbReference>
<dbReference type="GO" id="GO:0002098">
    <property type="term" value="P:tRNA wobble uridine modification"/>
    <property type="evidence" value="ECO:0007669"/>
    <property type="project" value="InterPro"/>
</dbReference>
<dbReference type="CDD" id="cd02440">
    <property type="entry name" value="AdoMet_MTases"/>
    <property type="match status" value="1"/>
</dbReference>
<dbReference type="Gene3D" id="3.40.50.150">
    <property type="entry name" value="Vaccinia Virus protein VP39"/>
    <property type="match status" value="1"/>
</dbReference>
<dbReference type="HAMAP" id="MF_01589">
    <property type="entry name" value="Cx_SAM_synthase"/>
    <property type="match status" value="1"/>
</dbReference>
<dbReference type="InterPro" id="IPR005271">
    <property type="entry name" value="CmoA"/>
</dbReference>
<dbReference type="InterPro" id="IPR041698">
    <property type="entry name" value="Methyltransf_25"/>
</dbReference>
<dbReference type="InterPro" id="IPR029063">
    <property type="entry name" value="SAM-dependent_MTases_sf"/>
</dbReference>
<dbReference type="NCBIfam" id="TIGR00740">
    <property type="entry name" value="carboxy-S-adenosyl-L-methionine synthase CmoA"/>
    <property type="match status" value="1"/>
</dbReference>
<dbReference type="NCBIfam" id="NF011995">
    <property type="entry name" value="PRK15451.1"/>
    <property type="match status" value="1"/>
</dbReference>
<dbReference type="PANTHER" id="PTHR43861:SF2">
    <property type="entry name" value="CARBOXY-S-ADENOSYL-L-METHIONINE SYNTHASE"/>
    <property type="match status" value="1"/>
</dbReference>
<dbReference type="PANTHER" id="PTHR43861">
    <property type="entry name" value="TRANS-ACONITATE 2-METHYLTRANSFERASE-RELATED"/>
    <property type="match status" value="1"/>
</dbReference>
<dbReference type="Pfam" id="PF13649">
    <property type="entry name" value="Methyltransf_25"/>
    <property type="match status" value="1"/>
</dbReference>
<dbReference type="PIRSF" id="PIRSF006325">
    <property type="entry name" value="MeTrfase_bac"/>
    <property type="match status" value="1"/>
</dbReference>
<dbReference type="SUPFAM" id="SSF53335">
    <property type="entry name" value="S-adenosyl-L-methionine-dependent methyltransferases"/>
    <property type="match status" value="1"/>
</dbReference>
<sequence length="243" mass="27569">MNSKQDRIYAKPAQTISDFQFDSRVAGVFNDMIRRSVPGYNQIIATLGDFARRYVTPNSKVFDLGSSLGSATLSIRRQIEGRQCQIIAIDNSQSMIERCEENLAAYVSDTQVTLVCDDIRNVDINNASMVVLNFTLQFLPPEDRDTLIKRIYDGMLPGGILVLSEKVKFDDACIQTLLDEQHLDFKRANGYSELEISQKRSALENVMRTDTLVQHQQRITDSGFSHFSVWFQCFNFASMVAIK</sequence>
<protein>
    <recommendedName>
        <fullName evidence="1">Carboxy-S-adenosyl-L-methionine synthase</fullName>
        <shortName evidence="1">Cx-SAM synthase</shortName>
        <ecNumber evidence="1">2.1.3.-</ecNumber>
    </recommendedName>
</protein>
<organism>
    <name type="scientific">Shewanella denitrificans (strain OS217 / ATCC BAA-1090 / DSM 15013)</name>
    <dbReference type="NCBI Taxonomy" id="318161"/>
    <lineage>
        <taxon>Bacteria</taxon>
        <taxon>Pseudomonadati</taxon>
        <taxon>Pseudomonadota</taxon>
        <taxon>Gammaproteobacteria</taxon>
        <taxon>Alteromonadales</taxon>
        <taxon>Shewanellaceae</taxon>
        <taxon>Shewanella</taxon>
    </lineage>
</organism>